<name>RPPH_ECO5E</name>
<accession>B5Z4E7</accession>
<reference key="1">
    <citation type="journal article" date="2011" name="Proc. Natl. Acad. Sci. U.S.A.">
        <title>Genomic anatomy of Escherichia coli O157:H7 outbreaks.</title>
        <authorList>
            <person name="Eppinger M."/>
            <person name="Mammel M.K."/>
            <person name="Leclerc J.E."/>
            <person name="Ravel J."/>
            <person name="Cebula T.A."/>
        </authorList>
    </citation>
    <scope>NUCLEOTIDE SEQUENCE [LARGE SCALE GENOMIC DNA]</scope>
    <source>
        <strain>EC4115 / EHEC</strain>
    </source>
</reference>
<protein>
    <recommendedName>
        <fullName evidence="1">RNA pyrophosphohydrolase</fullName>
        <ecNumber evidence="1">3.6.1.-</ecNumber>
    </recommendedName>
    <alternativeName>
        <fullName evidence="1">(Di)nucleoside polyphosphate hydrolase</fullName>
    </alternativeName>
</protein>
<gene>
    <name evidence="1" type="primary">rppH</name>
    <name evidence="1" type="synonym">nudH</name>
    <name type="ordered locus">ECH74115_4096</name>
</gene>
<feature type="chain" id="PRO_1000115275" description="RNA pyrophosphohydrolase">
    <location>
        <begin position="1"/>
        <end position="176"/>
    </location>
</feature>
<feature type="domain" description="Nudix hydrolase" evidence="1">
    <location>
        <begin position="6"/>
        <end position="149"/>
    </location>
</feature>
<feature type="short sequence motif" description="Nudix box">
    <location>
        <begin position="38"/>
        <end position="59"/>
    </location>
</feature>
<organism>
    <name type="scientific">Escherichia coli O157:H7 (strain EC4115 / EHEC)</name>
    <dbReference type="NCBI Taxonomy" id="444450"/>
    <lineage>
        <taxon>Bacteria</taxon>
        <taxon>Pseudomonadati</taxon>
        <taxon>Pseudomonadota</taxon>
        <taxon>Gammaproteobacteria</taxon>
        <taxon>Enterobacterales</taxon>
        <taxon>Enterobacteriaceae</taxon>
        <taxon>Escherichia</taxon>
    </lineage>
</organism>
<proteinExistence type="inferred from homology"/>
<dbReference type="EC" id="3.6.1.-" evidence="1"/>
<dbReference type="EMBL" id="CP001164">
    <property type="protein sequence ID" value="ACI36434.1"/>
    <property type="molecule type" value="Genomic_DNA"/>
</dbReference>
<dbReference type="RefSeq" id="WP_000564489.1">
    <property type="nucleotide sequence ID" value="NC_011353.1"/>
</dbReference>
<dbReference type="SMR" id="B5Z4E7"/>
<dbReference type="GeneID" id="75203778"/>
<dbReference type="KEGG" id="ecf:ECH74115_4096"/>
<dbReference type="HOGENOM" id="CLU_087195_3_2_6"/>
<dbReference type="GO" id="GO:0005737">
    <property type="term" value="C:cytoplasm"/>
    <property type="evidence" value="ECO:0007669"/>
    <property type="project" value="TreeGrafter"/>
</dbReference>
<dbReference type="GO" id="GO:0034353">
    <property type="term" value="F:mRNA 5'-diphosphatase activity"/>
    <property type="evidence" value="ECO:0007669"/>
    <property type="project" value="TreeGrafter"/>
</dbReference>
<dbReference type="GO" id="GO:0006402">
    <property type="term" value="P:mRNA catabolic process"/>
    <property type="evidence" value="ECO:0007669"/>
    <property type="project" value="TreeGrafter"/>
</dbReference>
<dbReference type="CDD" id="cd03671">
    <property type="entry name" value="NUDIX_Ap4A_hydrolase_plant_like"/>
    <property type="match status" value="1"/>
</dbReference>
<dbReference type="FunFam" id="3.90.79.10:FF:000001">
    <property type="entry name" value="RNA pyrophosphohydrolase"/>
    <property type="match status" value="1"/>
</dbReference>
<dbReference type="Gene3D" id="3.90.79.10">
    <property type="entry name" value="Nucleoside Triphosphate Pyrophosphohydrolase"/>
    <property type="match status" value="1"/>
</dbReference>
<dbReference type="HAMAP" id="MF_00298">
    <property type="entry name" value="Nudix_RppH"/>
    <property type="match status" value="1"/>
</dbReference>
<dbReference type="InterPro" id="IPR020476">
    <property type="entry name" value="Nudix_hydrolase"/>
</dbReference>
<dbReference type="InterPro" id="IPR015797">
    <property type="entry name" value="NUDIX_hydrolase-like_dom_sf"/>
</dbReference>
<dbReference type="InterPro" id="IPR020084">
    <property type="entry name" value="NUDIX_hydrolase_CS"/>
</dbReference>
<dbReference type="InterPro" id="IPR000086">
    <property type="entry name" value="NUDIX_hydrolase_dom"/>
</dbReference>
<dbReference type="InterPro" id="IPR022927">
    <property type="entry name" value="RppH"/>
</dbReference>
<dbReference type="NCBIfam" id="NF001934">
    <property type="entry name" value="PRK00714.1-1"/>
    <property type="match status" value="1"/>
</dbReference>
<dbReference type="NCBIfam" id="NF001937">
    <property type="entry name" value="PRK00714.1-4"/>
    <property type="match status" value="1"/>
</dbReference>
<dbReference type="NCBIfam" id="NF001938">
    <property type="entry name" value="PRK00714.1-5"/>
    <property type="match status" value="1"/>
</dbReference>
<dbReference type="PANTHER" id="PTHR23114">
    <property type="entry name" value="M7GPPPN-MRNA HYDROLASE"/>
    <property type="match status" value="1"/>
</dbReference>
<dbReference type="PANTHER" id="PTHR23114:SF17">
    <property type="entry name" value="M7GPPPN-MRNA HYDROLASE"/>
    <property type="match status" value="1"/>
</dbReference>
<dbReference type="Pfam" id="PF00293">
    <property type="entry name" value="NUDIX"/>
    <property type="match status" value="1"/>
</dbReference>
<dbReference type="PRINTS" id="PR00502">
    <property type="entry name" value="NUDIXFAMILY"/>
</dbReference>
<dbReference type="SUPFAM" id="SSF55811">
    <property type="entry name" value="Nudix"/>
    <property type="match status" value="1"/>
</dbReference>
<dbReference type="PROSITE" id="PS51462">
    <property type="entry name" value="NUDIX"/>
    <property type="match status" value="1"/>
</dbReference>
<dbReference type="PROSITE" id="PS00893">
    <property type="entry name" value="NUDIX_BOX"/>
    <property type="match status" value="1"/>
</dbReference>
<comment type="function">
    <text evidence="1">Accelerates the degradation of transcripts by removing pyrophosphate from the 5'-end of triphosphorylated RNA, leading to a more labile monophosphorylated state that can stimulate subsequent ribonuclease cleavage.</text>
</comment>
<comment type="cofactor">
    <cofactor evidence="1">
        <name>a divalent metal cation</name>
        <dbReference type="ChEBI" id="CHEBI:60240"/>
    </cofactor>
</comment>
<comment type="similarity">
    <text evidence="1">Belongs to the Nudix hydrolase family. RppH subfamily.</text>
</comment>
<evidence type="ECO:0000255" key="1">
    <source>
        <dbReference type="HAMAP-Rule" id="MF_00298"/>
    </source>
</evidence>
<sequence length="176" mass="20795">MIDDDGYRPNVGIVICNRQGQVMWARRFGQHSWQFPQGGINPGESAEQAMYRELFEEVGLSRKDVRILASTRNWLRYKLPKRLVRWDTKPVCIGQKQKWFLLQLVSGDAEINMQTSSTPEFDGWRWVSYWYPVRQVVSFKRDVYRRVMKEFASVVMSLQENTPKPQNASAYRRKRG</sequence>
<keyword id="KW-0378">Hydrolase</keyword>